<reference key="1">
    <citation type="journal article" date="2009" name="PLoS Genet.">
        <title>Organised genome dynamics in the Escherichia coli species results in highly diverse adaptive paths.</title>
        <authorList>
            <person name="Touchon M."/>
            <person name="Hoede C."/>
            <person name="Tenaillon O."/>
            <person name="Barbe V."/>
            <person name="Baeriswyl S."/>
            <person name="Bidet P."/>
            <person name="Bingen E."/>
            <person name="Bonacorsi S."/>
            <person name="Bouchier C."/>
            <person name="Bouvet O."/>
            <person name="Calteau A."/>
            <person name="Chiapello H."/>
            <person name="Clermont O."/>
            <person name="Cruveiller S."/>
            <person name="Danchin A."/>
            <person name="Diard M."/>
            <person name="Dossat C."/>
            <person name="Karoui M.E."/>
            <person name="Frapy E."/>
            <person name="Garry L."/>
            <person name="Ghigo J.M."/>
            <person name="Gilles A.M."/>
            <person name="Johnson J."/>
            <person name="Le Bouguenec C."/>
            <person name="Lescat M."/>
            <person name="Mangenot S."/>
            <person name="Martinez-Jehanne V."/>
            <person name="Matic I."/>
            <person name="Nassif X."/>
            <person name="Oztas S."/>
            <person name="Petit M.A."/>
            <person name="Pichon C."/>
            <person name="Rouy Z."/>
            <person name="Ruf C.S."/>
            <person name="Schneider D."/>
            <person name="Tourret J."/>
            <person name="Vacherie B."/>
            <person name="Vallenet D."/>
            <person name="Medigue C."/>
            <person name="Rocha E.P.C."/>
            <person name="Denamur E."/>
        </authorList>
    </citation>
    <scope>NUCLEOTIDE SEQUENCE [LARGE SCALE GENOMIC DNA]</scope>
    <source>
        <strain>S88 / ExPEC</strain>
    </source>
</reference>
<keyword id="KW-0028">Amino-acid biosynthesis</keyword>
<keyword id="KW-0032">Aminotransferase</keyword>
<keyword id="KW-0368">Histidine biosynthesis</keyword>
<keyword id="KW-0663">Pyridoxal phosphate</keyword>
<keyword id="KW-1185">Reference proteome</keyword>
<keyword id="KW-0808">Transferase</keyword>
<comment type="catalytic activity">
    <reaction evidence="1">
        <text>L-histidinol phosphate + 2-oxoglutarate = 3-(imidazol-4-yl)-2-oxopropyl phosphate + L-glutamate</text>
        <dbReference type="Rhea" id="RHEA:23744"/>
        <dbReference type="ChEBI" id="CHEBI:16810"/>
        <dbReference type="ChEBI" id="CHEBI:29985"/>
        <dbReference type="ChEBI" id="CHEBI:57766"/>
        <dbReference type="ChEBI" id="CHEBI:57980"/>
        <dbReference type="EC" id="2.6.1.9"/>
    </reaction>
</comment>
<comment type="cofactor">
    <cofactor evidence="1">
        <name>pyridoxal 5'-phosphate</name>
        <dbReference type="ChEBI" id="CHEBI:597326"/>
    </cofactor>
</comment>
<comment type="pathway">
    <text evidence="1">Amino-acid biosynthesis; L-histidine biosynthesis; L-histidine from 5-phospho-alpha-D-ribose 1-diphosphate: step 7/9.</text>
</comment>
<comment type="subunit">
    <text evidence="1">Homodimer.</text>
</comment>
<comment type="similarity">
    <text evidence="1">Belongs to the class-II pyridoxal-phosphate-dependent aminotransferase family. Histidinol-phosphate aminotransferase subfamily.</text>
</comment>
<feature type="chain" id="PRO_1000135391" description="Histidinol-phosphate aminotransferase">
    <location>
        <begin position="1"/>
        <end position="356"/>
    </location>
</feature>
<feature type="modified residue" description="N6-(pyridoxal phosphate)lysine" evidence="1">
    <location>
        <position position="214"/>
    </location>
</feature>
<evidence type="ECO:0000255" key="1">
    <source>
        <dbReference type="HAMAP-Rule" id="MF_01023"/>
    </source>
</evidence>
<dbReference type="EC" id="2.6.1.9" evidence="1"/>
<dbReference type="EMBL" id="CU928161">
    <property type="protein sequence ID" value="CAR03408.1"/>
    <property type="molecule type" value="Genomic_DNA"/>
</dbReference>
<dbReference type="RefSeq" id="WP_000108976.1">
    <property type="nucleotide sequence ID" value="NC_011742.1"/>
</dbReference>
<dbReference type="SMR" id="B7MDH5"/>
<dbReference type="KEGG" id="ecz:ECS88_2120"/>
<dbReference type="HOGENOM" id="CLU_017584_3_1_6"/>
<dbReference type="UniPathway" id="UPA00031">
    <property type="reaction ID" value="UER00012"/>
</dbReference>
<dbReference type="Proteomes" id="UP000000747">
    <property type="component" value="Chromosome"/>
</dbReference>
<dbReference type="GO" id="GO:0004400">
    <property type="term" value="F:histidinol-phosphate transaminase activity"/>
    <property type="evidence" value="ECO:0007669"/>
    <property type="project" value="UniProtKB-UniRule"/>
</dbReference>
<dbReference type="GO" id="GO:0030170">
    <property type="term" value="F:pyridoxal phosphate binding"/>
    <property type="evidence" value="ECO:0007669"/>
    <property type="project" value="InterPro"/>
</dbReference>
<dbReference type="GO" id="GO:0000105">
    <property type="term" value="P:L-histidine biosynthetic process"/>
    <property type="evidence" value="ECO:0007669"/>
    <property type="project" value="UniProtKB-UniRule"/>
</dbReference>
<dbReference type="CDD" id="cd00609">
    <property type="entry name" value="AAT_like"/>
    <property type="match status" value="1"/>
</dbReference>
<dbReference type="FunFam" id="3.40.640.10:FF:000032">
    <property type="entry name" value="Histidinol-phosphate aminotransferase"/>
    <property type="match status" value="1"/>
</dbReference>
<dbReference type="FunFam" id="3.90.1150.10:FF:000042">
    <property type="entry name" value="Histidinol-phosphate aminotransferase"/>
    <property type="match status" value="1"/>
</dbReference>
<dbReference type="Gene3D" id="3.90.1150.10">
    <property type="entry name" value="Aspartate Aminotransferase, domain 1"/>
    <property type="match status" value="1"/>
</dbReference>
<dbReference type="Gene3D" id="3.40.640.10">
    <property type="entry name" value="Type I PLP-dependent aspartate aminotransferase-like (Major domain)"/>
    <property type="match status" value="1"/>
</dbReference>
<dbReference type="HAMAP" id="MF_01023">
    <property type="entry name" value="HisC_aminotrans_2"/>
    <property type="match status" value="1"/>
</dbReference>
<dbReference type="InterPro" id="IPR001917">
    <property type="entry name" value="Aminotrans_II_pyridoxalP_BS"/>
</dbReference>
<dbReference type="InterPro" id="IPR004839">
    <property type="entry name" value="Aminotransferase_I/II_large"/>
</dbReference>
<dbReference type="InterPro" id="IPR005861">
    <property type="entry name" value="HisP_aminotrans"/>
</dbReference>
<dbReference type="InterPro" id="IPR015424">
    <property type="entry name" value="PyrdxlP-dep_Trfase"/>
</dbReference>
<dbReference type="InterPro" id="IPR015421">
    <property type="entry name" value="PyrdxlP-dep_Trfase_major"/>
</dbReference>
<dbReference type="InterPro" id="IPR015422">
    <property type="entry name" value="PyrdxlP-dep_Trfase_small"/>
</dbReference>
<dbReference type="NCBIfam" id="TIGR01141">
    <property type="entry name" value="hisC"/>
    <property type="match status" value="1"/>
</dbReference>
<dbReference type="PANTHER" id="PTHR42885:SF2">
    <property type="entry name" value="HISTIDINOL-PHOSPHATE AMINOTRANSFERASE"/>
    <property type="match status" value="1"/>
</dbReference>
<dbReference type="PANTHER" id="PTHR42885">
    <property type="entry name" value="HISTIDINOL-PHOSPHATE AMINOTRANSFERASE-RELATED"/>
    <property type="match status" value="1"/>
</dbReference>
<dbReference type="Pfam" id="PF00155">
    <property type="entry name" value="Aminotran_1_2"/>
    <property type="match status" value="1"/>
</dbReference>
<dbReference type="SUPFAM" id="SSF53383">
    <property type="entry name" value="PLP-dependent transferases"/>
    <property type="match status" value="1"/>
</dbReference>
<dbReference type="PROSITE" id="PS00599">
    <property type="entry name" value="AA_TRANSFER_CLASS_2"/>
    <property type="match status" value="1"/>
</dbReference>
<organism>
    <name type="scientific">Escherichia coli O45:K1 (strain S88 / ExPEC)</name>
    <dbReference type="NCBI Taxonomy" id="585035"/>
    <lineage>
        <taxon>Bacteria</taxon>
        <taxon>Pseudomonadati</taxon>
        <taxon>Pseudomonadota</taxon>
        <taxon>Gammaproteobacteria</taxon>
        <taxon>Enterobacterales</taxon>
        <taxon>Enterobacteriaceae</taxon>
        <taxon>Escherichia</taxon>
    </lineage>
</organism>
<proteinExistence type="inferred from homology"/>
<protein>
    <recommendedName>
        <fullName evidence="1">Histidinol-phosphate aminotransferase</fullName>
        <ecNumber evidence="1">2.6.1.9</ecNumber>
    </recommendedName>
    <alternativeName>
        <fullName evidence="1">Imidazole acetol-phosphate transaminase</fullName>
    </alternativeName>
</protein>
<accession>B7MDH5</accession>
<gene>
    <name evidence="1" type="primary">hisC</name>
    <name type="ordered locus">ECS88_2120</name>
</gene>
<name>HIS8_ECO45</name>
<sequence length="356" mass="39402">MSTVTITDLARENVRNLTPYQSARRLGGNGDVWLNANEYPTAVEFQLTQQTLNRYPECQPKAVIENYAQYAGVKPEQVLVSRGADEGIELLIRAFCEPGKDAILYCPPTYGMYSVSAETIGVECRTVPTLENWQLDLQGISDKLDGVKVVYVCSPNNPTGQLINPQDFRTLLELTRGKAIVVADEAYIEFCPQASLVGWLAEYPHLAILRTLSKAFALAGLRCGFTLANEEVINLLMKVIAPYPLSTPVADIAAQALSPQGIVAMRERVAQIIAEREYLIAALKEIPCVEQVFDSETNYILARFKASSAVFKSLWDQGIILRDQNKQPSLSGCLRITVGTREESQRVIDALRAEQV</sequence>